<keyword id="KW-0001">2Fe-2S</keyword>
<keyword id="KW-0058">Aromatic hydrocarbons catabolism</keyword>
<keyword id="KW-0997">Cell inner membrane</keyword>
<keyword id="KW-1003">Cell membrane</keyword>
<keyword id="KW-0903">Direct protein sequencing</keyword>
<keyword id="KW-0274">FAD</keyword>
<keyword id="KW-0285">Flavoprotein</keyword>
<keyword id="KW-0408">Iron</keyword>
<keyword id="KW-0411">Iron-sulfur</keyword>
<keyword id="KW-0472">Membrane</keyword>
<keyword id="KW-0479">Metal-binding</keyword>
<keyword id="KW-0520">NAD</keyword>
<keyword id="KW-0560">Oxidoreductase</keyword>
<keyword id="KW-0614">Plasmid</keyword>
<gene>
    <name evidence="4" type="primary">xylA</name>
</gene>
<feature type="chain" id="PRO_0000167660" description="Xylene/toluene monooxygenase electron transfer component XylA">
    <location>
        <begin position="1"/>
        <end position="350"/>
    </location>
</feature>
<feature type="domain" description="2Fe-2S ferredoxin-type" evidence="1">
    <location>
        <begin position="16"/>
        <end position="108"/>
    </location>
</feature>
<feature type="domain" description="FAD-binding FR-type" evidence="2">
    <location>
        <begin position="114"/>
        <end position="213"/>
    </location>
</feature>
<feature type="region of interest" description="Ferredoxin--NADH reductase">
    <location>
        <begin position="109"/>
        <end position="350"/>
    </location>
</feature>
<feature type="binding site" evidence="1">
    <location>
        <position position="52"/>
    </location>
    <ligand>
        <name>[2Fe-2S] cluster</name>
        <dbReference type="ChEBI" id="CHEBI:190135"/>
    </ligand>
</feature>
<feature type="binding site" evidence="1">
    <location>
        <position position="57"/>
    </location>
    <ligand>
        <name>[2Fe-2S] cluster</name>
        <dbReference type="ChEBI" id="CHEBI:190135"/>
    </ligand>
</feature>
<feature type="binding site" evidence="1">
    <location>
        <position position="60"/>
    </location>
    <ligand>
        <name>[2Fe-2S] cluster</name>
        <dbReference type="ChEBI" id="CHEBI:190135"/>
    </ligand>
</feature>
<feature type="binding site" evidence="1">
    <location>
        <position position="92"/>
    </location>
    <ligand>
        <name>[2Fe-2S] cluster</name>
        <dbReference type="ChEBI" id="CHEBI:190135"/>
    </ligand>
</feature>
<evidence type="ECO:0000255" key="1">
    <source>
        <dbReference type="PROSITE-ProRule" id="PRU00465"/>
    </source>
</evidence>
<evidence type="ECO:0000255" key="2">
    <source>
        <dbReference type="PROSITE-ProRule" id="PRU00716"/>
    </source>
</evidence>
<evidence type="ECO:0000269" key="3">
    <source>
    </source>
</evidence>
<evidence type="ECO:0000303" key="4">
    <source>
    </source>
</evidence>
<evidence type="ECO:0000305" key="5"/>
<evidence type="ECO:0000305" key="6">
    <source>
    </source>
</evidence>
<evidence type="ECO:0000305" key="7">
    <source>
    </source>
</evidence>
<proteinExistence type="evidence at protein level"/>
<geneLocation type="plasmid">
    <name>TOL pWW0</name>
</geneLocation>
<reference key="1">
    <citation type="journal article" date="1991" name="J. Bacteriol.">
        <title>Primary structure of xylene monooxygenase: similarities to and differences from the alkane hydroxylation system.</title>
        <authorList>
            <person name="Suzuki M."/>
            <person name="Hayakawa T."/>
            <person name="Shaw J.P."/>
            <person name="Rekik M."/>
            <person name="Harayama S."/>
        </authorList>
    </citation>
    <scope>NUCLEOTIDE SEQUENCE [GENOMIC DNA]</scope>
    <scope>PROTEIN SEQUENCE OF 6-16</scope>
</reference>
<reference key="2">
    <citation type="journal article" date="1992" name="Eur. J. Biochem.">
        <title>Purification and characterisation of the NADH:acceptor reductase component of xylene monooxygenase encoded by the TOL plasmid pWW0 of Pseudomonas putida mt-2.</title>
        <authorList>
            <person name="Shaw J.P."/>
            <person name="Harayama S."/>
        </authorList>
    </citation>
    <scope>PROTEIN SEQUENCE OF 6-16</scope>
    <scope>FUNCTION</scope>
    <scope>CATALYTIC ACTIVITY</scope>
    <scope>COFACTOR</scope>
    <scope>ACTIVITY REGULATION</scope>
    <scope>BIOPHYSICOCHEMICAL PROPERTIES</scope>
    <scope>SUBUNIT</scope>
</reference>
<protein>
    <recommendedName>
        <fullName evidence="5">Xylene/toluene monooxygenase electron transfer component XylA</fullName>
    </recommendedName>
    <domain>
        <recommendedName>
            <fullName>Ferredoxin</fullName>
        </recommendedName>
    </domain>
    <domain>
        <recommendedName>
            <fullName>Ferredoxin--NAD(+) reductase</fullName>
            <ecNumber evidence="3">1.18.1.3</ecNumber>
        </recommendedName>
    </domain>
</protein>
<sequence length="350" mass="38455">MNEFFKKISGLFVPPPESTVSVRGQGFQFKVPRGQTILESALHQGIAFPHDCKVGSCGTCKYKLISGRVNELTSSAMGLSGDLYQSGYRLGCQCIPKEDLEIELDTVLGQALVPIETSALISKQKRLAHDIVEMEVVPDKQIAFYPGQYADVECAECSAVRSYSFSAPPQPDGSLSFHVRLVPGGVFSGWLFGGDRTGATLTLRAPYGQFGLHESNATMVCVAGGTGLAPIKCVLQSMTQAQRERDVLLFFGARQQRDLYCLDEIEALQLDWGGRFELIPVLSEESSTSSWKGKRGMVTEYFKEYLTGQPYEGYLCGPPPMVDAAETELVRLGVARELVFADRFYNRPPC</sequence>
<organism>
    <name type="scientific">Pseudomonas putida</name>
    <name type="common">Arthrobacter siderocapsulatus</name>
    <dbReference type="NCBI Taxonomy" id="303"/>
    <lineage>
        <taxon>Bacteria</taxon>
        <taxon>Pseudomonadati</taxon>
        <taxon>Pseudomonadota</taxon>
        <taxon>Gammaproteobacteria</taxon>
        <taxon>Pseudomonadales</taxon>
        <taxon>Pseudomonadaceae</taxon>
        <taxon>Pseudomonas</taxon>
    </lineage>
</organism>
<accession>P21394</accession>
<comment type="function">
    <text evidence="3">Component of a monooxygenase that catalyzes the first step in the degradation of xylenes and toluenes (PubMed:1327782). XylA is responsible for the transport of electrons from the electron donor NADH to the terminal hydroxylase component, XylM (PubMed:1327782).</text>
</comment>
<comment type="catalytic activity">
    <reaction evidence="3">
        <text>2 reduced [2Fe-2S]-[ferredoxin] + NAD(+) + H(+) = 2 oxidized [2Fe-2S]-[ferredoxin] + NADH</text>
        <dbReference type="Rhea" id="RHEA:16521"/>
        <dbReference type="Rhea" id="RHEA-COMP:10000"/>
        <dbReference type="Rhea" id="RHEA-COMP:10001"/>
        <dbReference type="ChEBI" id="CHEBI:15378"/>
        <dbReference type="ChEBI" id="CHEBI:33737"/>
        <dbReference type="ChEBI" id="CHEBI:33738"/>
        <dbReference type="ChEBI" id="CHEBI:57540"/>
        <dbReference type="ChEBI" id="CHEBI:57945"/>
        <dbReference type="EC" id="1.18.1.3"/>
    </reaction>
</comment>
<comment type="cofactor">
    <cofactor evidence="3">
        <name>FAD</name>
        <dbReference type="ChEBI" id="CHEBI:57692"/>
    </cofactor>
</comment>
<comment type="cofactor">
    <cofactor evidence="3">
        <name>[2Fe-2S] cluster</name>
        <dbReference type="ChEBI" id="CHEBI:190135"/>
    </cofactor>
    <text evidence="3">Binds 1 2Fe-2S cluster per subunit.</text>
</comment>
<comment type="activity regulation">
    <text evidence="3">The reductase activity is completely inhibited by quercetin (a common inhibitor of mammalian oxidoreductases) and p-chloromercuribenzoate, but not by iodoacetimide, N-ethylmaleimide and pyrrazole.</text>
</comment>
<comment type="biophysicochemical properties">
    <kinetics>
        <KM evidence="3">22 uM for NADH</KM>
    </kinetics>
    <phDependence>
        <text evidence="3">Optimum pH is 8.5.</text>
    </phDependence>
    <temperatureDependence>
        <text evidence="3">Inactivated at temperatures greater than 40 degrees Celsius.</text>
    </temperatureDependence>
</comment>
<comment type="subunit">
    <text evidence="3 6 7">Monomer (PubMed:1327782). The xylene/toluene monooxygenase is composed of two subunits: the electron transfer component XylA and the hydroxylase component XylM (Probable).</text>
</comment>
<comment type="subcellular location">
    <subcellularLocation>
        <location evidence="7">Cell inner membrane</location>
        <topology evidence="7">Peripheral membrane protein</topology>
    </subcellularLocation>
</comment>
<comment type="similarity">
    <text evidence="5">Belongs to the bacterial ring-hydroxylating dioxygenase ferredoxin reductase family.</text>
</comment>
<name>XYLA_PSEPU</name>
<dbReference type="EC" id="1.18.1.3" evidence="3"/>
<dbReference type="EMBL" id="M37480">
    <property type="protein sequence ID" value="AAA26027.1"/>
    <property type="molecule type" value="Genomic_DNA"/>
</dbReference>
<dbReference type="EMBL" id="D63341">
    <property type="protein sequence ID" value="BAA09663.1"/>
    <property type="molecule type" value="Genomic_DNA"/>
</dbReference>
<dbReference type="PIR" id="B37316">
    <property type="entry name" value="B37316"/>
</dbReference>
<dbReference type="RefSeq" id="NP_542886.1">
    <property type="nucleotide sequence ID" value="NC_003350.1"/>
</dbReference>
<dbReference type="RefSeq" id="WP_011005929.1">
    <property type="nucleotide sequence ID" value="NZ_LT852425.1"/>
</dbReference>
<dbReference type="SMR" id="P21394"/>
<dbReference type="KEGG" id="ag:AAA26027"/>
<dbReference type="BioCyc" id="MetaCyc:MONOMER-2941"/>
<dbReference type="BRENDA" id="1.18.1.3">
    <property type="organism ID" value="5092"/>
</dbReference>
<dbReference type="GO" id="GO:0005886">
    <property type="term" value="C:plasma membrane"/>
    <property type="evidence" value="ECO:0007669"/>
    <property type="project" value="UniProtKB-SubCell"/>
</dbReference>
<dbReference type="GO" id="GO:0051537">
    <property type="term" value="F:2 iron, 2 sulfur cluster binding"/>
    <property type="evidence" value="ECO:0007669"/>
    <property type="project" value="UniProtKB-KW"/>
</dbReference>
<dbReference type="GO" id="GO:0008860">
    <property type="term" value="F:ferredoxin-NAD+ reductase activity"/>
    <property type="evidence" value="ECO:0007669"/>
    <property type="project" value="UniProtKB-EC"/>
</dbReference>
<dbReference type="GO" id="GO:0046872">
    <property type="term" value="F:metal ion binding"/>
    <property type="evidence" value="ECO:0007669"/>
    <property type="project" value="UniProtKB-KW"/>
</dbReference>
<dbReference type="GO" id="GO:0009056">
    <property type="term" value="P:catabolic process"/>
    <property type="evidence" value="ECO:0007669"/>
    <property type="project" value="UniProtKB-KW"/>
</dbReference>
<dbReference type="CDD" id="cd00207">
    <property type="entry name" value="fer2"/>
    <property type="match status" value="1"/>
</dbReference>
<dbReference type="CDD" id="cd06213">
    <property type="entry name" value="oxygenase_e_transfer_subunit"/>
    <property type="match status" value="1"/>
</dbReference>
<dbReference type="Gene3D" id="3.10.20.30">
    <property type="match status" value="1"/>
</dbReference>
<dbReference type="Gene3D" id="3.40.50.80">
    <property type="entry name" value="Nucleotide-binding domain of ferredoxin-NADP reductase (FNR) module"/>
    <property type="match status" value="1"/>
</dbReference>
<dbReference type="Gene3D" id="2.40.30.10">
    <property type="entry name" value="Translation factors"/>
    <property type="match status" value="1"/>
</dbReference>
<dbReference type="InterPro" id="IPR036010">
    <property type="entry name" value="2Fe-2S_ferredoxin-like_sf"/>
</dbReference>
<dbReference type="InterPro" id="IPR001041">
    <property type="entry name" value="2Fe-2S_ferredoxin-type"/>
</dbReference>
<dbReference type="InterPro" id="IPR006058">
    <property type="entry name" value="2Fe2S_fd_BS"/>
</dbReference>
<dbReference type="InterPro" id="IPR012675">
    <property type="entry name" value="Beta-grasp_dom_sf"/>
</dbReference>
<dbReference type="InterPro" id="IPR008333">
    <property type="entry name" value="Cbr1-like_FAD-bd_dom"/>
</dbReference>
<dbReference type="InterPro" id="IPR017927">
    <property type="entry name" value="FAD-bd_FR_type"/>
</dbReference>
<dbReference type="InterPro" id="IPR001709">
    <property type="entry name" value="Flavoprot_Pyr_Nucl_cyt_Rdtase"/>
</dbReference>
<dbReference type="InterPro" id="IPR039261">
    <property type="entry name" value="FNR_nucleotide-bd"/>
</dbReference>
<dbReference type="InterPro" id="IPR050415">
    <property type="entry name" value="MRET"/>
</dbReference>
<dbReference type="InterPro" id="IPR001433">
    <property type="entry name" value="OxRdtase_FAD/NAD-bd"/>
</dbReference>
<dbReference type="InterPro" id="IPR017938">
    <property type="entry name" value="Riboflavin_synthase-like_b-brl"/>
</dbReference>
<dbReference type="PANTHER" id="PTHR47354">
    <property type="entry name" value="NADH OXIDOREDUCTASE HCR"/>
    <property type="match status" value="1"/>
</dbReference>
<dbReference type="PANTHER" id="PTHR47354:SF5">
    <property type="entry name" value="PROTEIN RFBI"/>
    <property type="match status" value="1"/>
</dbReference>
<dbReference type="Pfam" id="PF00970">
    <property type="entry name" value="FAD_binding_6"/>
    <property type="match status" value="1"/>
</dbReference>
<dbReference type="Pfam" id="PF00111">
    <property type="entry name" value="Fer2"/>
    <property type="match status" value="1"/>
</dbReference>
<dbReference type="Pfam" id="PF00175">
    <property type="entry name" value="NAD_binding_1"/>
    <property type="match status" value="1"/>
</dbReference>
<dbReference type="PRINTS" id="PR00371">
    <property type="entry name" value="FPNCR"/>
</dbReference>
<dbReference type="PRINTS" id="PR00410">
    <property type="entry name" value="PHEHYDRXLASE"/>
</dbReference>
<dbReference type="SUPFAM" id="SSF54292">
    <property type="entry name" value="2Fe-2S ferredoxin-like"/>
    <property type="match status" value="1"/>
</dbReference>
<dbReference type="SUPFAM" id="SSF52343">
    <property type="entry name" value="Ferredoxin reductase-like, C-terminal NADP-linked domain"/>
    <property type="match status" value="1"/>
</dbReference>
<dbReference type="SUPFAM" id="SSF63380">
    <property type="entry name" value="Riboflavin synthase domain-like"/>
    <property type="match status" value="1"/>
</dbReference>
<dbReference type="PROSITE" id="PS00197">
    <property type="entry name" value="2FE2S_FER_1"/>
    <property type="match status" value="1"/>
</dbReference>
<dbReference type="PROSITE" id="PS51085">
    <property type="entry name" value="2FE2S_FER_2"/>
    <property type="match status" value="1"/>
</dbReference>
<dbReference type="PROSITE" id="PS51384">
    <property type="entry name" value="FAD_FR"/>
    <property type="match status" value="1"/>
</dbReference>